<comment type="subcellular location">
    <subcellularLocation>
        <location evidence="1">Secreted</location>
        <location evidence="1">Cell wall</location>
    </subcellularLocation>
</comment>
<accession>P80851</accession>
<keyword id="KW-0134">Cell wall</keyword>
<keyword id="KW-0903">Direct protein sequencing</keyword>
<keyword id="KW-0964">Secreted</keyword>
<sequence length="18" mass="1971">VDTSRLFLTVVNNPPTVV</sequence>
<dbReference type="GO" id="GO:0005576">
    <property type="term" value="C:extracellular region"/>
    <property type="evidence" value="ECO:0007669"/>
    <property type="project" value="UniProtKB-KW"/>
</dbReference>
<protein>
    <recommendedName>
        <fullName>27 kDa cell wall protein</fullName>
    </recommendedName>
</protein>
<reference evidence="3" key="1">
    <citation type="journal article" date="1997" name="J. Biol. Chem.">
        <title>Differential extraction and protein sequencing reveals major differences in patterns of primary cell wall proteins from plants.</title>
        <authorList>
            <person name="Robertson D."/>
            <person name="Mitchell G.P."/>
            <person name="Gilroy J.S."/>
            <person name="Gerrish C."/>
            <person name="Bolwell G.P."/>
            <person name="Slabas A.R."/>
        </authorList>
    </citation>
    <scope>PROTEIN SEQUENCE</scope>
    <scope>SUBCELLULAR LOCATION</scope>
    <source>
        <strain>cv. Landsberg erecta</strain>
    </source>
</reference>
<feature type="chain" id="PRO_0000079719" description="27 kDa cell wall protein">
    <location>
        <begin position="1"/>
        <end position="18" status="greater than"/>
    </location>
</feature>
<feature type="non-terminal residue" evidence="2">
    <location>
        <position position="18"/>
    </location>
</feature>
<proteinExistence type="evidence at protein level"/>
<name>CWP31_ARATH</name>
<evidence type="ECO:0000269" key="1">
    <source>
    </source>
</evidence>
<evidence type="ECO:0000303" key="2">
    <source>
    </source>
</evidence>
<evidence type="ECO:0000305" key="3"/>
<organism>
    <name type="scientific">Arabidopsis thaliana</name>
    <name type="common">Mouse-ear cress</name>
    <dbReference type="NCBI Taxonomy" id="3702"/>
    <lineage>
        <taxon>Eukaryota</taxon>
        <taxon>Viridiplantae</taxon>
        <taxon>Streptophyta</taxon>
        <taxon>Embryophyta</taxon>
        <taxon>Tracheophyta</taxon>
        <taxon>Spermatophyta</taxon>
        <taxon>Magnoliopsida</taxon>
        <taxon>eudicotyledons</taxon>
        <taxon>Gunneridae</taxon>
        <taxon>Pentapetalae</taxon>
        <taxon>rosids</taxon>
        <taxon>malvids</taxon>
        <taxon>Brassicales</taxon>
        <taxon>Brassicaceae</taxon>
        <taxon>Camelineae</taxon>
        <taxon>Arabidopsis</taxon>
    </lineage>
</organism>